<accession>A9WS75</accession>
<organism>
    <name type="scientific">Renibacterium salmoninarum (strain ATCC 33209 / DSM 20767 / JCM 11484 / NBRC 15589 / NCIMB 2235)</name>
    <dbReference type="NCBI Taxonomy" id="288705"/>
    <lineage>
        <taxon>Bacteria</taxon>
        <taxon>Bacillati</taxon>
        <taxon>Actinomycetota</taxon>
        <taxon>Actinomycetes</taxon>
        <taxon>Micrococcales</taxon>
        <taxon>Micrococcaceae</taxon>
        <taxon>Renibacterium</taxon>
    </lineage>
</organism>
<proteinExistence type="inferred from homology"/>
<evidence type="ECO:0000255" key="1">
    <source>
        <dbReference type="HAMAP-Rule" id="MF_00440"/>
    </source>
</evidence>
<reference key="1">
    <citation type="journal article" date="2008" name="J. Bacteriol.">
        <title>Genome sequence of the fish pathogen Renibacterium salmoninarum suggests reductive evolution away from an environmental Arthrobacter ancestor.</title>
        <authorList>
            <person name="Wiens G.D."/>
            <person name="Rockey D.D."/>
            <person name="Wu Z."/>
            <person name="Chang J."/>
            <person name="Levy R."/>
            <person name="Crane S."/>
            <person name="Chen D.S."/>
            <person name="Capri G.R."/>
            <person name="Burnett J.R."/>
            <person name="Sudheesh P.S."/>
            <person name="Schipma M.J."/>
            <person name="Burd H."/>
            <person name="Bhattacharyya A."/>
            <person name="Rhodes L.D."/>
            <person name="Kaul R."/>
            <person name="Strom M.S."/>
        </authorList>
    </citation>
    <scope>NUCLEOTIDE SEQUENCE [LARGE SCALE GENOMIC DNA]</scope>
    <source>
        <strain>ATCC 33209 / DSM 20767 / JCM 11484 / NBRC 15589 / NCIMB 2235</strain>
    </source>
</reference>
<keyword id="KW-0067">ATP-binding</keyword>
<keyword id="KW-0238">DNA-binding</keyword>
<keyword id="KW-0479">Metal-binding</keyword>
<keyword id="KW-0547">Nucleotide-binding</keyword>
<keyword id="KW-1185">Reference proteome</keyword>
<keyword id="KW-0678">Repressor</keyword>
<keyword id="KW-0804">Transcription</keyword>
<keyword id="KW-0805">Transcription regulation</keyword>
<keyword id="KW-0862">Zinc</keyword>
<keyword id="KW-0863">Zinc-finger</keyword>
<feature type="chain" id="PRO_1000080809" description="Transcriptional repressor NrdR">
    <location>
        <begin position="1"/>
        <end position="163"/>
    </location>
</feature>
<feature type="domain" description="ATP-cone" evidence="1">
    <location>
        <begin position="46"/>
        <end position="136"/>
    </location>
</feature>
<feature type="zinc finger region" evidence="1">
    <location>
        <begin position="3"/>
        <end position="34"/>
    </location>
</feature>
<sequence>MYCPFCRHPDSRVVDSRVSDDGSSIRRRRQCPQCERRFTTVETTSLTVIKRSGIGEPFSRGKVINGVRKACQGRPVSEDDLAVLAQEVEENIRASGAAEIEAHEVGLAILGPLQKLDKIAYLRFASVYQAFESLDDFEHAIEILRHEADLDGSAESAKKQVRP</sequence>
<comment type="function">
    <text evidence="1">Negatively regulates transcription of bacterial ribonucleotide reductase nrd genes and operons by binding to NrdR-boxes.</text>
</comment>
<comment type="cofactor">
    <cofactor evidence="1">
        <name>Zn(2+)</name>
        <dbReference type="ChEBI" id="CHEBI:29105"/>
    </cofactor>
    <text evidence="1">Binds 1 zinc ion.</text>
</comment>
<comment type="similarity">
    <text evidence="1">Belongs to the NrdR family.</text>
</comment>
<protein>
    <recommendedName>
        <fullName evidence="1">Transcriptional repressor NrdR</fullName>
    </recommendedName>
</protein>
<dbReference type="EMBL" id="CP000910">
    <property type="protein sequence ID" value="ABY24204.1"/>
    <property type="molecule type" value="Genomic_DNA"/>
</dbReference>
<dbReference type="RefSeq" id="WP_012245864.1">
    <property type="nucleotide sequence ID" value="NC_010168.1"/>
</dbReference>
<dbReference type="SMR" id="A9WS75"/>
<dbReference type="STRING" id="288705.RSal33209_2478"/>
<dbReference type="KEGG" id="rsa:RSal33209_2478"/>
<dbReference type="eggNOG" id="COG1327">
    <property type="taxonomic scope" value="Bacteria"/>
</dbReference>
<dbReference type="HOGENOM" id="CLU_108412_1_0_11"/>
<dbReference type="Proteomes" id="UP000002007">
    <property type="component" value="Chromosome"/>
</dbReference>
<dbReference type="GO" id="GO:0005524">
    <property type="term" value="F:ATP binding"/>
    <property type="evidence" value="ECO:0007669"/>
    <property type="project" value="UniProtKB-KW"/>
</dbReference>
<dbReference type="GO" id="GO:0003677">
    <property type="term" value="F:DNA binding"/>
    <property type="evidence" value="ECO:0007669"/>
    <property type="project" value="UniProtKB-KW"/>
</dbReference>
<dbReference type="GO" id="GO:0008270">
    <property type="term" value="F:zinc ion binding"/>
    <property type="evidence" value="ECO:0007669"/>
    <property type="project" value="UniProtKB-UniRule"/>
</dbReference>
<dbReference type="GO" id="GO:0045892">
    <property type="term" value="P:negative regulation of DNA-templated transcription"/>
    <property type="evidence" value="ECO:0007669"/>
    <property type="project" value="UniProtKB-UniRule"/>
</dbReference>
<dbReference type="HAMAP" id="MF_00440">
    <property type="entry name" value="NrdR"/>
    <property type="match status" value="1"/>
</dbReference>
<dbReference type="InterPro" id="IPR005144">
    <property type="entry name" value="ATP-cone_dom"/>
</dbReference>
<dbReference type="InterPro" id="IPR055173">
    <property type="entry name" value="NrdR-like_N"/>
</dbReference>
<dbReference type="InterPro" id="IPR003796">
    <property type="entry name" value="RNR_NrdR-like"/>
</dbReference>
<dbReference type="NCBIfam" id="TIGR00244">
    <property type="entry name" value="transcriptional regulator NrdR"/>
    <property type="match status" value="1"/>
</dbReference>
<dbReference type="PANTHER" id="PTHR30455">
    <property type="entry name" value="TRANSCRIPTIONAL REPRESSOR NRDR"/>
    <property type="match status" value="1"/>
</dbReference>
<dbReference type="PANTHER" id="PTHR30455:SF2">
    <property type="entry name" value="TRANSCRIPTIONAL REPRESSOR NRDR"/>
    <property type="match status" value="1"/>
</dbReference>
<dbReference type="Pfam" id="PF03477">
    <property type="entry name" value="ATP-cone"/>
    <property type="match status" value="1"/>
</dbReference>
<dbReference type="Pfam" id="PF22811">
    <property type="entry name" value="Zn_ribbon_NrdR"/>
    <property type="match status" value="1"/>
</dbReference>
<dbReference type="PROSITE" id="PS51161">
    <property type="entry name" value="ATP_CONE"/>
    <property type="match status" value="1"/>
</dbReference>
<name>NRDR_RENSM</name>
<gene>
    <name evidence="1" type="primary">nrdR</name>
    <name type="ordered locus">RSal33209_2478</name>
</gene>